<keyword id="KW-0963">Cytoplasm</keyword>
<keyword id="KW-0238">DNA-binding</keyword>
<keyword id="KW-1017">Isopeptide bond</keyword>
<keyword id="KW-0446">Lipid-binding</keyword>
<keyword id="KW-0449">Lipoprotein</keyword>
<keyword id="KW-0479">Metal-binding</keyword>
<keyword id="KW-0539">Nucleus</keyword>
<keyword id="KW-0564">Palmitate</keyword>
<keyword id="KW-0597">Phosphoprotein</keyword>
<keyword id="KW-0675">Receptor</keyword>
<keyword id="KW-0754">Steroid-binding</keyword>
<keyword id="KW-0804">Transcription</keyword>
<keyword id="KW-0805">Transcription regulation</keyword>
<keyword id="KW-0832">Ubl conjugation</keyword>
<keyword id="KW-0862">Zinc</keyword>
<keyword id="KW-0863">Zinc-finger</keyword>
<reference key="1">
    <citation type="journal article" date="2002" name="Mol. Cell. Endocrinol.">
        <title>Virilization of the female spotted hyena cannot be explained by alterations in the amino acid sequence of the androgen receptor (AR).</title>
        <authorList>
            <person name="Catalano S."/>
            <person name="Avila D.M."/>
            <person name="Marsico S."/>
            <person name="Wilson J.D."/>
            <person name="Glickman S.E."/>
            <person name="McPhaul M.J."/>
        </authorList>
    </citation>
    <scope>NUCLEOTIDE SEQUENCE [MRNA]</scope>
</reference>
<name>ANDR_CROCR</name>
<comment type="function">
    <text evidence="2 3">Steroid hormone receptors are ligand-activated transcription factors that regulate eukaryotic gene expression and affect cellular proliferation and differentiation in target tissues. Transcription factor activity is modulated by bound coactivator and corepressor proteins like ZBTB7A that recruits NCOR1 and NCOR2 to the androgen response elements/ARE on target genes, negatively regulating androgen receptor signaling and androgen-induced cell proliferation. Transcription activation is also down-regulated by NR0B2. Activated, but not phosphorylated, by HIPK3 and ZIPK/DAPK3.</text>
</comment>
<comment type="subunit">
    <text evidence="2 3 4">Binds DNA as a homodimer. Part of a ternary complex containing AR, EFCAB6/DJBP and PARK7. Interacts with HIPK3 and NR0B2 in the presence of androgen. The ligand binding domain interacts with KAT7/HBO1 in the presence of dihydrotestosterone. Interacts with EFCAB6/DJBP, PQBP1, RANBP9, RBAK, SPDEF, SRA1, TGFB1I1 and RREB1. Interacts with ZMIZ1/ZIMP10 and ZMIZ2/ZMIP7 which both enhance its transactivation activity. Interacts with SLC30A9 and RAD54L2/ARIP4. Interacts with MACROD1 (via macro domain) (By similarity). Interacts via the ligand-binding domain with LXXLL and FXXLF motifs from NCOA1, NCOA2, NCOA3 and MAGEA11. Interacts (via nuclear receptor DNA binding domain and nuclear receptor ligand binding domain) with NCOA4 (By similarity). The AR N-terminal poly-Gln region binds Ran resulting in enhancement of AR-mediated transactivation. Ran-binding decreases as the poly-Gln length increases. Interacts with HIP1 (via coiled coil domain). Interacts (via ligand-binding domain) with TRIM68. Interacts with TNK2. Interacts with USP26. Interacts with RNF6. Interacts (regulated by RNF6 probably through polyubiquitination) with RNF14; regulates AR transcriptional activity. Interacts with PRMT2 and TRIM24. Interacts with RACK1. Interacts with RANBP10; this interaction enhances dihydrotestosterone-induced AR transcriptional activity. Interacts with PRPF6 in a hormone-independent way; this interaction enhances dihydrotestosterone-induced AR transcriptional activity. Interacts with STK4/MST1. Interacts with ZIPK/DAPK3. Interacts with LPXN. Interacts with MAK. Part of a complex containing AR, MAK and NCOA3. Interacts with CRY1. Interacts with CCAR1 and GATA2. Interacts with ZNF318. Interacts with BUD31. Interacts with ARID4A. Interacts with ARID4B. Interacts (via NR LBD domain) with ZBTB7A; the interaction is direct and androgen-dependent (By similarity). Interacts with NCOR1 (By similarity). Interacts with NCOR2 (By similarity). Interacts with CRY2 in a ligand-dependent manner (By similarity).</text>
</comment>
<comment type="subcellular location">
    <subcellularLocation>
        <location evidence="2">Nucleus</location>
    </subcellularLocation>
    <subcellularLocation>
        <location evidence="2">Cytoplasm</location>
    </subcellularLocation>
    <text evidence="2">Detected at the promoter of target genes. Predominantly cytoplasmic in unligated form but translocates to the nucleus upon ligand-binding. Can also translocate to the nucleus in unligated form in the presence of RACK1.</text>
</comment>
<comment type="domain">
    <text evidence="1">Composed of three domains: a modulating N-terminal domain, a DNA-binding domain and a C-terminal ligand-binding domain. In the presence of bound steroid the ligand-binding domain interacts with the N-terminal modulating domain, and thereby activates AR transcription factor activity. Agonist binding is required for dimerization and binding to target DNA. The transcription factor activity of the complex formed by ligand-activated AR and DNA is modulated by interactions with coactivator and corepressor proteins. Interaction with RANBP9 is mediated by both the N-terminal domain and the DNA-binding domain. Interaction with EFCAB6/DJBP is mediated by the DNA-binding domain. Interacts with HIP1 (via coiled coil domain) (By similarity).</text>
</comment>
<comment type="PTM">
    <text evidence="2">Phosphorylation by TNK2 enhances the DNA-binding and transcriptional activity. Phosphorylation at Ser-69 by CDK9 regulates AR promoter selectivity and cell growth (By similarity).</text>
</comment>
<comment type="PTM">
    <text evidence="2">Sumoylated on Lys-394 (major) and Lys-513 (By similarity). Ubiquitinated. Deubiquitinated by USP26 (By similarity). 'Lys-6' and 'Lys-27'-linked polyubiquitination by RNF6 modulates AR transcriptional activity and specificity (By similarity).</text>
</comment>
<comment type="PTM">
    <text evidence="2">Palmitoylated by ZDHHC7 and ZDHHC21. Palmitoylation is required for plasma membrane targeting and for rapid intracellular signaling via ERK and AKT kinases and cAMP generation (By similarity).</text>
</comment>
<comment type="miscellaneous">
    <text>In the absence of ligand, steroid hormone receptors are thought to be weakly associated with nuclear components; hormone binding greatly increases receptor affinity. The hormone-receptor complex appears to recognize discrete DNA sequences upstream of transcriptional start sites.</text>
</comment>
<comment type="miscellaneous">
    <text>Transcriptional activity is enhanced by binding to RANBP9.</text>
</comment>
<comment type="similarity">
    <text evidence="8">Belongs to the nuclear hormone receptor family. NR3 subfamily.</text>
</comment>
<evidence type="ECO:0000250" key="1"/>
<evidence type="ECO:0000250" key="2">
    <source>
        <dbReference type="UniProtKB" id="P10275"/>
    </source>
</evidence>
<evidence type="ECO:0000250" key="3">
    <source>
        <dbReference type="UniProtKB" id="P15207"/>
    </source>
</evidence>
<evidence type="ECO:0000250" key="4">
    <source>
        <dbReference type="UniProtKB" id="P19091"/>
    </source>
</evidence>
<evidence type="ECO:0000255" key="5">
    <source>
        <dbReference type="PROSITE-ProRule" id="PRU00407"/>
    </source>
</evidence>
<evidence type="ECO:0000255" key="6">
    <source>
        <dbReference type="PROSITE-ProRule" id="PRU01189"/>
    </source>
</evidence>
<evidence type="ECO:0000256" key="7">
    <source>
        <dbReference type="SAM" id="MobiDB-lite"/>
    </source>
</evidence>
<evidence type="ECO:0000305" key="8"/>
<gene>
    <name type="primary">AR</name>
    <name type="synonym">NR3C4</name>
</gene>
<sequence length="912" mass="99958">MEVQLGLGRVYPRPPSKTYRGAFQNLFQSVREVIQNPGPRHPEATSAAPPGARLQQQHQHQQQHQHETSPRRQQQQQPEDGSPQRPSRGPTSYLALDEEQQPSQHQSAKGHPESGCVPEPVAMSRTGKGLEQQQPAPPDEDDSAAPSTLSLLGPTFPGLSSCSTDLKDILSEAGTMQLLQRQRQRQQQRQQQQQQQQQQQQQQQQQQEVVSEGGSSGRAREAAGAPTSSKDSYLGGSSTISDSAKELCKAVSVSMGLGVEALEHLSPGEQLRGDCMYAPLLGGPPPVCPCAPLTECKGSVLDDGPSKGTEETAEYSPFKTGYAKGLDGDSLGCSGSSQAGGSGTLEIPSTLSLYKSGTLDEAAAYQSRDYYNFQLSLAGPPPPPPSPHPHARIKLENPLDYGSAWAAAAAQCRYGDLASLHGGGAAGPGSGSPSATASSSWHTLFTAEEGQLYGPCGGSGGGGTGESVSVTPYGYTRPQQGLTGQEGDFPPPDVWYPGGVVSRMPYPSASCVKSEMGPWMESYSGPYGDMRLETTRDHVLPIDYYFPPQKTCLICGDEASGCHYGALTCGSCKVFFKRAAEGKQKYLCASRNDCTIDKFRRKNCPPCRLRKCYEAGMTLGARRLKKLGNLKLQEEGEASSTTSPTEETTQKLTVSHIEGYECQPIFLNVLEAIEPGVVCAGHDNNQPDSFAALLSSLNELGERQLVHVVKWAKALPGFRNLHVDDQMAVIQYSWMGLMVFAMGWRSFTNVNSRMLYFAPDLVFNEYRMHKSRMYSQCVRMRHLSQEFGWLQITPQEFLCMKALLLFSIIPVDGLKNQKFFDELRMNYIKDLDRIIACKRKNPTSCSRRFYQLTKLLDSVQPIARELHQFTFDLLIKSHMVSVDFPEMMAEIISVQVPKILSGKVKPIYFHTQ</sequence>
<accession>Q8MIK0</accession>
<protein>
    <recommendedName>
        <fullName>Androgen receptor</fullName>
    </recommendedName>
    <alternativeName>
        <fullName>Dihydrotestosterone receptor</fullName>
    </alternativeName>
    <alternativeName>
        <fullName>Nuclear receptor subfamily 3 group C member 4</fullName>
    </alternativeName>
</protein>
<proteinExistence type="evidence at transcript level"/>
<dbReference type="EMBL" id="AY128705">
    <property type="protein sequence ID" value="AAM96904.1"/>
    <property type="molecule type" value="mRNA"/>
</dbReference>
<dbReference type="SMR" id="Q8MIK0"/>
<dbReference type="OrthoDB" id="10032732at2759"/>
<dbReference type="GO" id="GO:0000785">
    <property type="term" value="C:chromatin"/>
    <property type="evidence" value="ECO:0000250"/>
    <property type="project" value="UniProtKB"/>
</dbReference>
<dbReference type="GO" id="GO:0005737">
    <property type="term" value="C:cytoplasm"/>
    <property type="evidence" value="ECO:0000250"/>
    <property type="project" value="UniProtKB"/>
</dbReference>
<dbReference type="GO" id="GO:0005634">
    <property type="term" value="C:nucleus"/>
    <property type="evidence" value="ECO:0000250"/>
    <property type="project" value="UniProtKB"/>
</dbReference>
<dbReference type="GO" id="GO:0005497">
    <property type="term" value="F:androgen binding"/>
    <property type="evidence" value="ECO:0000250"/>
    <property type="project" value="UniProtKB"/>
</dbReference>
<dbReference type="GO" id="GO:0008013">
    <property type="term" value="F:beta-catenin binding"/>
    <property type="evidence" value="ECO:0000250"/>
    <property type="project" value="UniProtKB"/>
</dbReference>
<dbReference type="GO" id="GO:0003700">
    <property type="term" value="F:DNA-binding transcription factor activity"/>
    <property type="evidence" value="ECO:0000250"/>
    <property type="project" value="UniProtKB"/>
</dbReference>
<dbReference type="GO" id="GO:0004879">
    <property type="term" value="F:nuclear receptor activity"/>
    <property type="evidence" value="ECO:0000250"/>
    <property type="project" value="UniProtKB"/>
</dbReference>
<dbReference type="GO" id="GO:0005496">
    <property type="term" value="F:steroid binding"/>
    <property type="evidence" value="ECO:0007669"/>
    <property type="project" value="UniProtKB-KW"/>
</dbReference>
<dbReference type="GO" id="GO:0000976">
    <property type="term" value="F:transcription cis-regulatory region binding"/>
    <property type="evidence" value="ECO:0000250"/>
    <property type="project" value="UniProtKB"/>
</dbReference>
<dbReference type="GO" id="GO:0008270">
    <property type="term" value="F:zinc ion binding"/>
    <property type="evidence" value="ECO:0007669"/>
    <property type="project" value="UniProtKB-KW"/>
</dbReference>
<dbReference type="GO" id="GO:0030521">
    <property type="term" value="P:androgen receptor signaling pathway"/>
    <property type="evidence" value="ECO:0000250"/>
    <property type="project" value="UniProtKB"/>
</dbReference>
<dbReference type="GO" id="GO:0030522">
    <property type="term" value="P:intracellular receptor signaling pathway"/>
    <property type="evidence" value="ECO:0000250"/>
    <property type="project" value="UniProtKB"/>
</dbReference>
<dbReference type="GO" id="GO:2001237">
    <property type="term" value="P:negative regulation of extrinsic apoptotic signaling pathway"/>
    <property type="evidence" value="ECO:0000250"/>
    <property type="project" value="UniProtKB"/>
</dbReference>
<dbReference type="GO" id="GO:0008284">
    <property type="term" value="P:positive regulation of cell population proliferation"/>
    <property type="evidence" value="ECO:0000250"/>
    <property type="project" value="UniProtKB"/>
</dbReference>
<dbReference type="GO" id="GO:0010628">
    <property type="term" value="P:positive regulation of gene expression"/>
    <property type="evidence" value="ECO:0000250"/>
    <property type="project" value="UniProtKB"/>
</dbReference>
<dbReference type="GO" id="GO:0045944">
    <property type="term" value="P:positive regulation of transcription by RNA polymerase II"/>
    <property type="evidence" value="ECO:0000250"/>
    <property type="project" value="UniProtKB"/>
</dbReference>
<dbReference type="GO" id="GO:1903076">
    <property type="term" value="P:regulation of protein localization to plasma membrane"/>
    <property type="evidence" value="ECO:0000250"/>
    <property type="project" value="UniProtKB"/>
</dbReference>
<dbReference type="CDD" id="cd07173">
    <property type="entry name" value="NR_DBD_AR"/>
    <property type="match status" value="1"/>
</dbReference>
<dbReference type="CDD" id="cd07073">
    <property type="entry name" value="NR_LBD_AR"/>
    <property type="match status" value="1"/>
</dbReference>
<dbReference type="FunFam" id="3.30.50.10:FF:000024">
    <property type="entry name" value="Androgen receptor"/>
    <property type="match status" value="1"/>
</dbReference>
<dbReference type="FunFam" id="1.10.565.10:FF:000004">
    <property type="entry name" value="Androgen receptor variant"/>
    <property type="match status" value="1"/>
</dbReference>
<dbReference type="Gene3D" id="3.30.50.10">
    <property type="entry name" value="Erythroid Transcription Factor GATA-1, subunit A"/>
    <property type="match status" value="1"/>
</dbReference>
<dbReference type="Gene3D" id="1.10.565.10">
    <property type="entry name" value="Retinoid X Receptor"/>
    <property type="match status" value="1"/>
</dbReference>
<dbReference type="InterPro" id="IPR001103">
    <property type="entry name" value="Andrgn_rcpt"/>
</dbReference>
<dbReference type="InterPro" id="IPR035500">
    <property type="entry name" value="NHR-like_dom_sf"/>
</dbReference>
<dbReference type="InterPro" id="IPR000536">
    <property type="entry name" value="Nucl_hrmn_rcpt_lig-bd"/>
</dbReference>
<dbReference type="InterPro" id="IPR050200">
    <property type="entry name" value="Nuclear_hormone_rcpt_NR3"/>
</dbReference>
<dbReference type="InterPro" id="IPR001628">
    <property type="entry name" value="Znf_hrmn_rcpt"/>
</dbReference>
<dbReference type="InterPro" id="IPR013088">
    <property type="entry name" value="Znf_NHR/GATA"/>
</dbReference>
<dbReference type="PANTHER" id="PTHR48092">
    <property type="entry name" value="KNIRPS-RELATED PROTEIN-RELATED"/>
    <property type="match status" value="1"/>
</dbReference>
<dbReference type="Pfam" id="PF02166">
    <property type="entry name" value="Androgen_recep"/>
    <property type="match status" value="1"/>
</dbReference>
<dbReference type="Pfam" id="PF00104">
    <property type="entry name" value="Hormone_recep"/>
    <property type="match status" value="1"/>
</dbReference>
<dbReference type="Pfam" id="PF00105">
    <property type="entry name" value="zf-C4"/>
    <property type="match status" value="1"/>
</dbReference>
<dbReference type="PRINTS" id="PR00521">
    <property type="entry name" value="ANDROGENR"/>
</dbReference>
<dbReference type="PRINTS" id="PR00047">
    <property type="entry name" value="STROIDFINGER"/>
</dbReference>
<dbReference type="SMART" id="SM00430">
    <property type="entry name" value="HOLI"/>
    <property type="match status" value="1"/>
</dbReference>
<dbReference type="SMART" id="SM00399">
    <property type="entry name" value="ZnF_C4"/>
    <property type="match status" value="1"/>
</dbReference>
<dbReference type="SUPFAM" id="SSF57716">
    <property type="entry name" value="Glucocorticoid receptor-like (DNA-binding domain)"/>
    <property type="match status" value="1"/>
</dbReference>
<dbReference type="SUPFAM" id="SSF48508">
    <property type="entry name" value="Nuclear receptor ligand-binding domain"/>
    <property type="match status" value="1"/>
</dbReference>
<dbReference type="PROSITE" id="PS51843">
    <property type="entry name" value="NR_LBD"/>
    <property type="match status" value="1"/>
</dbReference>
<dbReference type="PROSITE" id="PS00031">
    <property type="entry name" value="NUCLEAR_REC_DBD_1"/>
    <property type="match status" value="1"/>
</dbReference>
<dbReference type="PROSITE" id="PS51030">
    <property type="entry name" value="NUCLEAR_REC_DBD_2"/>
    <property type="match status" value="1"/>
</dbReference>
<organism>
    <name type="scientific">Crocuta crocuta</name>
    <name type="common">Spotted hyena</name>
    <dbReference type="NCBI Taxonomy" id="9678"/>
    <lineage>
        <taxon>Eukaryota</taxon>
        <taxon>Metazoa</taxon>
        <taxon>Chordata</taxon>
        <taxon>Craniata</taxon>
        <taxon>Vertebrata</taxon>
        <taxon>Euteleostomi</taxon>
        <taxon>Mammalia</taxon>
        <taxon>Eutheria</taxon>
        <taxon>Laurasiatheria</taxon>
        <taxon>Carnivora</taxon>
        <taxon>Feliformia</taxon>
        <taxon>Hyaenidae</taxon>
        <taxon>Crocuta</taxon>
    </lineage>
</organism>
<feature type="chain" id="PRO_0000053702" description="Androgen receptor">
    <location>
        <begin position="1"/>
        <end position="912"/>
    </location>
</feature>
<feature type="domain" description="NR LBD" evidence="6">
    <location>
        <begin position="661"/>
        <end position="892"/>
    </location>
</feature>
<feature type="DNA-binding region" description="Nuclear receptor" evidence="5">
    <location>
        <begin position="551"/>
        <end position="624"/>
    </location>
</feature>
<feature type="zinc finger region" description="NR C4-type" evidence="5">
    <location>
        <begin position="552"/>
        <end position="572"/>
    </location>
</feature>
<feature type="zinc finger region" description="NR C4-type" evidence="5">
    <location>
        <begin position="588"/>
        <end position="612"/>
    </location>
</feature>
<feature type="region of interest" description="Interaction with ZNF318" evidence="4">
    <location>
        <begin position="1"/>
        <end position="579"/>
    </location>
</feature>
<feature type="region of interest" description="Modulating" evidence="1">
    <location>
        <begin position="1"/>
        <end position="550"/>
    </location>
</feature>
<feature type="region of interest" description="Disordered" evidence="7">
    <location>
        <begin position="35"/>
        <end position="156"/>
    </location>
</feature>
<feature type="region of interest" description="Disordered" evidence="7">
    <location>
        <begin position="204"/>
        <end position="236"/>
    </location>
</feature>
<feature type="region of interest" description="Disordered" evidence="7">
    <location>
        <begin position="375"/>
        <end position="394"/>
    </location>
</feature>
<feature type="region of interest" description="Disordered" evidence="7">
    <location>
        <begin position="452"/>
        <end position="490"/>
    </location>
</feature>
<feature type="region of interest" description="Interaction with LPXN" evidence="2">
    <location>
        <begin position="544"/>
        <end position="911"/>
    </location>
</feature>
<feature type="region of interest" description="Interaction with HIPK3" evidence="3">
    <location>
        <begin position="564"/>
        <end position="654"/>
    </location>
</feature>
<feature type="region of interest" description="Interaction with CCAR1" evidence="2">
    <location>
        <begin position="584"/>
        <end position="911"/>
    </location>
</feature>
<feature type="region of interest" description="Interaction with KAT7" evidence="2">
    <location>
        <begin position="617"/>
        <end position="911"/>
    </location>
</feature>
<feature type="compositionally biased region" description="Low complexity" evidence="7">
    <location>
        <begin position="204"/>
        <end position="213"/>
    </location>
</feature>
<feature type="compositionally biased region" description="Polar residues" evidence="7">
    <location>
        <begin position="226"/>
        <end position="236"/>
    </location>
</feature>
<feature type="compositionally biased region" description="Pro residues" evidence="7">
    <location>
        <begin position="379"/>
        <end position="388"/>
    </location>
</feature>
<feature type="compositionally biased region" description="Gly residues" evidence="7">
    <location>
        <begin position="455"/>
        <end position="465"/>
    </location>
</feature>
<feature type="binding site" evidence="2">
    <location>
        <position position="698"/>
    </location>
    <ligand>
        <name>17beta-hydroxy-5alpha-androstan-3-one</name>
        <dbReference type="ChEBI" id="CHEBI:16330"/>
    </ligand>
</feature>
<feature type="binding site" evidence="2">
    <location>
        <position position="745"/>
    </location>
    <ligand>
        <name>17beta-hydroxy-5alpha-androstan-3-one</name>
        <dbReference type="ChEBI" id="CHEBI:16330"/>
    </ligand>
</feature>
<feature type="binding site" evidence="2">
    <location>
        <position position="870"/>
    </location>
    <ligand>
        <name>17beta-hydroxy-5alpha-androstan-3-one</name>
        <dbReference type="ChEBI" id="CHEBI:16330"/>
    </ligand>
</feature>
<feature type="site" description="Interaction with coactivator LXXL and FXXFY motifs" evidence="2">
    <location>
        <position position="713"/>
    </location>
</feature>
<feature type="site" description="Interaction with coactivator FXXLF and FXXFY motifs" evidence="2">
    <location>
        <position position="890"/>
    </location>
</feature>
<feature type="modified residue" description="Phosphoserine; by CDK9" evidence="2">
    <location>
        <position position="69"/>
    </location>
</feature>
<feature type="modified residue" description="Phosphoserine" evidence="2">
    <location>
        <position position="82"/>
    </location>
</feature>
<feature type="modified residue" description="Phosphotyrosine; by CSK" evidence="2">
    <location>
        <position position="233"/>
    </location>
</feature>
<feature type="modified residue" description="Phosphoserine" evidence="2">
    <location>
        <position position="266"/>
    </location>
</feature>
<feature type="modified residue" description="Phosphotyrosine; by CSK and TNK2" evidence="2">
    <location>
        <position position="277"/>
    </location>
</feature>
<feature type="modified residue" description="Phosphotyrosine; by CSK" evidence="2">
    <location>
        <position position="315"/>
    </location>
</feature>
<feature type="modified residue" description="Phosphotyrosine; by CSK" evidence="2">
    <location>
        <position position="354"/>
    </location>
</feature>
<feature type="modified residue" description="Phosphotyrosine; by CSK" evidence="2">
    <location>
        <position position="365"/>
    </location>
</feature>
<feature type="modified residue" description="Phosphotyrosine; by CSK" evidence="2">
    <location>
        <position position="370"/>
    </location>
</feature>
<feature type="modified residue" description="Phosphotyrosine; by CSK and TNK2" evidence="2">
    <location>
        <position position="371"/>
    </location>
</feature>
<feature type="modified residue" description="Phosphotyrosine; by CSK" evidence="2">
    <location>
        <position position="401"/>
    </location>
</feature>
<feature type="modified residue" description="Phosphotyrosine; by CSK" evidence="2">
    <location>
        <position position="527"/>
    </location>
</feature>
<feature type="modified residue" description="Phosphotyrosine; by CSK" evidence="2">
    <location>
        <position position="544"/>
    </location>
</feature>
<feature type="modified residue" description="Phosphoserine; by STK4/MST1" evidence="2">
    <location>
        <position position="643"/>
    </location>
</feature>
<feature type="modified residue" description="Phosphotyrosine; by CSK" evidence="2">
    <location>
        <position position="908"/>
    </location>
</feature>
<feature type="cross-link" description="Glycyl lysine isopeptide (Lys-Gly) (interchain with G-Cter in SUMO)" evidence="1">
    <location>
        <position position="394"/>
    </location>
</feature>
<feature type="cross-link" description="Glycyl lysine isopeptide (Lys-Gly) (interchain with G-Cter in SUMO)" evidence="1">
    <location>
        <position position="513"/>
    </location>
</feature>
<feature type="cross-link" description="Glycyl lysine isopeptide (Lys-Gly) (interchain with G-Cter in ubiquitin)" evidence="2">
    <location>
        <position position="838"/>
    </location>
</feature>
<feature type="cross-link" description="Glycyl lysine isopeptide (Lys-Gly) (interchain with G-Cter in ubiquitin)" evidence="2">
    <location>
        <position position="840"/>
    </location>
</feature>